<organism>
    <name type="scientific">Escherichia coli O157:H7</name>
    <dbReference type="NCBI Taxonomy" id="83334"/>
    <lineage>
        <taxon>Bacteria</taxon>
        <taxon>Pseudomonadati</taxon>
        <taxon>Pseudomonadota</taxon>
        <taxon>Gammaproteobacteria</taxon>
        <taxon>Enterobacterales</taxon>
        <taxon>Enterobacteriaceae</taxon>
        <taxon>Escherichia</taxon>
    </lineage>
</organism>
<reference key="1">
    <citation type="journal article" date="2001" name="Nature">
        <title>Genome sequence of enterohaemorrhagic Escherichia coli O157:H7.</title>
        <authorList>
            <person name="Perna N.T."/>
            <person name="Plunkett G. III"/>
            <person name="Burland V."/>
            <person name="Mau B."/>
            <person name="Glasner J.D."/>
            <person name="Rose D.J."/>
            <person name="Mayhew G.F."/>
            <person name="Evans P.S."/>
            <person name="Gregor J."/>
            <person name="Kirkpatrick H.A."/>
            <person name="Posfai G."/>
            <person name="Hackett J."/>
            <person name="Klink S."/>
            <person name="Boutin A."/>
            <person name="Shao Y."/>
            <person name="Miller L."/>
            <person name="Grotbeck E.J."/>
            <person name="Davis N.W."/>
            <person name="Lim A."/>
            <person name="Dimalanta E.T."/>
            <person name="Potamousis K."/>
            <person name="Apodaca J."/>
            <person name="Anantharaman T.S."/>
            <person name="Lin J."/>
            <person name="Yen G."/>
            <person name="Schwartz D.C."/>
            <person name="Welch R.A."/>
            <person name="Blattner F.R."/>
        </authorList>
    </citation>
    <scope>NUCLEOTIDE SEQUENCE [LARGE SCALE GENOMIC DNA]</scope>
    <source>
        <strain>O157:H7 / EDL933 / ATCC 700927 / EHEC</strain>
    </source>
</reference>
<reference key="2">
    <citation type="journal article" date="2001" name="DNA Res.">
        <title>Complete genome sequence of enterohemorrhagic Escherichia coli O157:H7 and genomic comparison with a laboratory strain K-12.</title>
        <authorList>
            <person name="Hayashi T."/>
            <person name="Makino K."/>
            <person name="Ohnishi M."/>
            <person name="Kurokawa K."/>
            <person name="Ishii K."/>
            <person name="Yokoyama K."/>
            <person name="Han C.-G."/>
            <person name="Ohtsubo E."/>
            <person name="Nakayama K."/>
            <person name="Murata T."/>
            <person name="Tanaka M."/>
            <person name="Tobe T."/>
            <person name="Iida T."/>
            <person name="Takami H."/>
            <person name="Honda T."/>
            <person name="Sasakawa C."/>
            <person name="Ogasawara N."/>
            <person name="Yasunaga T."/>
            <person name="Kuhara S."/>
            <person name="Shiba T."/>
            <person name="Hattori M."/>
            <person name="Shinagawa H."/>
        </authorList>
    </citation>
    <scope>NUCLEOTIDE SEQUENCE [LARGE SCALE GENOMIC DNA]</scope>
    <source>
        <strain>O157:H7 / Sakai / RIMD 0509952 / EHEC</strain>
    </source>
</reference>
<evidence type="ECO:0000255" key="1">
    <source>
        <dbReference type="HAMAP-Rule" id="MF_00958"/>
    </source>
</evidence>
<evidence type="ECO:0000255" key="2">
    <source>
        <dbReference type="PROSITE-ProRule" id="PRU00169"/>
    </source>
</evidence>
<gene>
    <name evidence="1" type="primary">rssB</name>
    <name type="synonym">hnr</name>
    <name type="ordered locus">Z2011</name>
    <name type="ordered locus">ECs1737</name>
</gene>
<proteinExistence type="inferred from homology"/>
<protein>
    <recommendedName>
        <fullName evidence="1">Regulator of RpoS</fullName>
    </recommendedName>
</protein>
<feature type="chain" id="PRO_0000081389" description="Regulator of RpoS">
    <location>
        <begin position="1"/>
        <end position="337"/>
    </location>
</feature>
<feature type="domain" description="Response regulatory" evidence="2">
    <location>
        <begin position="9"/>
        <end position="123"/>
    </location>
</feature>
<feature type="modified residue" description="4-aspartylphosphate" evidence="1">
    <location>
        <position position="58"/>
    </location>
</feature>
<keyword id="KW-0597">Phosphoprotein</keyword>
<keyword id="KW-1185">Reference proteome</keyword>
<keyword id="KW-0346">Stress response</keyword>
<comment type="function">
    <text evidence="1">Regulates the turnover of the sigma S factor (RpoS) by promoting its proteolysis in exponentially growing cells. Acts by binding and delivering RpoS to the ClpXP protease. RssB is not co-degraded with RpoS, but is released from the complex and can initiate a new cycle of RpoS recognition and degradation.</text>
</comment>
<comment type="subunit">
    <text evidence="1">Binds to RpoS.</text>
</comment>
<comment type="PTM">
    <text evidence="1">Phosphorylated. Phosphorylation stimulates the interaction with RpoS and, therefore, the proteolysis of RpoS.</text>
</comment>
<comment type="similarity">
    <text evidence="1">Belongs to the RssB family.</text>
</comment>
<accession>P0AEV2</accession>
<accession>P37055</accession>
<dbReference type="EMBL" id="AE005174">
    <property type="protein sequence ID" value="AAG56092.1"/>
    <property type="molecule type" value="Genomic_DNA"/>
</dbReference>
<dbReference type="EMBL" id="BA000007">
    <property type="protein sequence ID" value="BAB35160.1"/>
    <property type="molecule type" value="Genomic_DNA"/>
</dbReference>
<dbReference type="PIR" id="A90846">
    <property type="entry name" value="A90846"/>
</dbReference>
<dbReference type="PIR" id="H85703">
    <property type="entry name" value="H85703"/>
</dbReference>
<dbReference type="RefSeq" id="NP_309764.1">
    <property type="nucleotide sequence ID" value="NC_002695.1"/>
</dbReference>
<dbReference type="RefSeq" id="WP_000193447.1">
    <property type="nucleotide sequence ID" value="NZ_VOAI01000031.1"/>
</dbReference>
<dbReference type="SMR" id="P0AEV2"/>
<dbReference type="STRING" id="155864.Z2011"/>
<dbReference type="GeneID" id="913115"/>
<dbReference type="GeneID" id="93775301"/>
<dbReference type="KEGG" id="ece:Z2011"/>
<dbReference type="KEGG" id="ecs:ECs_1737"/>
<dbReference type="PATRIC" id="fig|386585.9.peg.1837"/>
<dbReference type="eggNOG" id="COG0745">
    <property type="taxonomic scope" value="Bacteria"/>
</dbReference>
<dbReference type="HOGENOM" id="CLU_055989_1_0_6"/>
<dbReference type="OMA" id="ICDWIMP"/>
<dbReference type="Proteomes" id="UP000000558">
    <property type="component" value="Chromosome"/>
</dbReference>
<dbReference type="Proteomes" id="UP000002519">
    <property type="component" value="Chromosome"/>
</dbReference>
<dbReference type="GO" id="GO:0000160">
    <property type="term" value="P:phosphorelay signal transduction system"/>
    <property type="evidence" value="ECO:0007669"/>
    <property type="project" value="InterPro"/>
</dbReference>
<dbReference type="GO" id="GO:0045862">
    <property type="term" value="P:positive regulation of proteolysis"/>
    <property type="evidence" value="ECO:0007669"/>
    <property type="project" value="UniProtKB-UniRule"/>
</dbReference>
<dbReference type="GO" id="GO:0010468">
    <property type="term" value="P:regulation of gene expression"/>
    <property type="evidence" value="ECO:0007669"/>
    <property type="project" value="UniProtKB-UniRule"/>
</dbReference>
<dbReference type="CDD" id="cd00156">
    <property type="entry name" value="REC"/>
    <property type="match status" value="1"/>
</dbReference>
<dbReference type="FunFam" id="3.40.50.2300:FF:000076">
    <property type="entry name" value="Regulator of RpoS"/>
    <property type="match status" value="1"/>
</dbReference>
<dbReference type="FunFam" id="3.60.40.10:FF:000012">
    <property type="entry name" value="Regulator of RpoS"/>
    <property type="match status" value="1"/>
</dbReference>
<dbReference type="Gene3D" id="3.40.50.2300">
    <property type="match status" value="1"/>
</dbReference>
<dbReference type="Gene3D" id="3.60.40.10">
    <property type="entry name" value="PPM-type phosphatase domain"/>
    <property type="match status" value="1"/>
</dbReference>
<dbReference type="HAMAP" id="MF_00958">
    <property type="entry name" value="RssB"/>
    <property type="match status" value="1"/>
</dbReference>
<dbReference type="InterPro" id="IPR050595">
    <property type="entry name" value="Bact_response_regulator"/>
</dbReference>
<dbReference type="InterPro" id="IPR011006">
    <property type="entry name" value="CheY-like_superfamily"/>
</dbReference>
<dbReference type="InterPro" id="IPR036457">
    <property type="entry name" value="PPM-type-like_dom_sf"/>
</dbReference>
<dbReference type="InterPro" id="IPR028616">
    <property type="entry name" value="RssB"/>
</dbReference>
<dbReference type="InterPro" id="IPR001789">
    <property type="entry name" value="Sig_transdc_resp-reg_receiver"/>
</dbReference>
<dbReference type="NCBIfam" id="NF007969">
    <property type="entry name" value="PRK10693.1"/>
    <property type="match status" value="1"/>
</dbReference>
<dbReference type="PANTHER" id="PTHR44591:SF23">
    <property type="entry name" value="CHEY SUBFAMILY"/>
    <property type="match status" value="1"/>
</dbReference>
<dbReference type="PANTHER" id="PTHR44591">
    <property type="entry name" value="STRESS RESPONSE REGULATOR PROTEIN 1"/>
    <property type="match status" value="1"/>
</dbReference>
<dbReference type="Pfam" id="PF00072">
    <property type="entry name" value="Response_reg"/>
    <property type="match status" value="1"/>
</dbReference>
<dbReference type="SMART" id="SM00448">
    <property type="entry name" value="REC"/>
    <property type="match status" value="1"/>
</dbReference>
<dbReference type="SUPFAM" id="SSF52172">
    <property type="entry name" value="CheY-like"/>
    <property type="match status" value="1"/>
</dbReference>
<dbReference type="PROSITE" id="PS50110">
    <property type="entry name" value="RESPONSE_REGULATORY"/>
    <property type="match status" value="1"/>
</dbReference>
<name>RSSB_ECO57</name>
<sequence>MTQPLVGKQILIVEDEQVFRSLLDSWFSSLGATTVLAADGVDALELLGGFTPDLMICDIAMPRMNGLKLLEHIRNRGDQTPVLVISATENMADIAKALRLGVEDVLLKPVKDLNRLREMVFACLYPSMFNSRVEEEERLFRDWDAMVDNPAAAAKLLQELQPPVQQVISHCRVNYRQLVAADKPGLVLDIAALSENDLAFYCLDVTRAGHNGVLAALLLRALFNGLLQEQLAHQNQRLPELGALLKQVNHLLRQANLPGQFPLLVGYYHRELKNLILVSAGLNATLNTGEHQVQISNGVPLGTLGNAYLNQLSQRCDAWQCQIWGTGGRLRLMLSAE</sequence>